<sequence length="492" mass="55567">METIALLAALFFIALTCFLTSGRRRNLPPGPYPLPIIGNMLQLGSNPHQSFAQLSKKYGPLMSIHLGSLYTVIVSSPEMAKEILHKHGQAFSGRTIAQAVHACDHDKISMGFLPVTSVWRDLRKICKEQMFSHQSLEASEGLRHQKLQQLLDYAQKCCETGRAVDIREASFITTLNLMSATMFSTQATEFESEATKEFKEIIEGVATIVGVPNFADYFPILKPFDLQGIKRQADGYFGRLLKKIEGYLNERVESRRLNPDAPRKNDFLETVVDIIEADEYKLTTDHLTHLMLDLFVGGSETNTTSLEWIMSELVINPDKMAKVKDEIKSVVGDKKIVDESEMPRLPYLQAAIKEVLRIHPPGPLLLPRRAEIDQEVNGYLIPKGTQILFNAWAIGRDPSIWKNPESFEPERFLDQTVDFKGQDFELIPFGSGRRICPGMPLANRILHMTTATLVHNFDWKLEEETANADHQDELFGLAVRRAVPLKIIPLRP</sequence>
<accession>A0A1Z3GBS4</accession>
<comment type="function">
    <text evidence="4">Cytochrome P450 enzyme (CYP) which catalyzes a unique two-electron oxidation cascade on abieta-8,11,13-triene to produce ferruginol, an intermediate in tanshinone biosynthesis.</text>
</comment>
<comment type="catalytic activity">
    <reaction evidence="4">
        <text>abieta-8,11,13-triene + reduced [NADPH--hemoprotein reductase] + O2 = ferruginol + oxidized [NADPH--hemoprotein reductase] + H2O + H(+)</text>
        <dbReference type="Rhea" id="RHEA:48080"/>
        <dbReference type="Rhea" id="RHEA-COMP:11964"/>
        <dbReference type="Rhea" id="RHEA-COMP:11965"/>
        <dbReference type="ChEBI" id="CHEBI:15377"/>
        <dbReference type="ChEBI" id="CHEBI:15378"/>
        <dbReference type="ChEBI" id="CHEBI:15379"/>
        <dbReference type="ChEBI" id="CHEBI:57618"/>
        <dbReference type="ChEBI" id="CHEBI:58210"/>
        <dbReference type="ChEBI" id="CHEBI:78274"/>
        <dbReference type="ChEBI" id="CHEBI:86062"/>
        <dbReference type="EC" id="1.14.14.175"/>
    </reaction>
    <physiologicalReaction direction="left-to-right" evidence="4">
        <dbReference type="Rhea" id="RHEA:48081"/>
    </physiologicalReaction>
</comment>
<comment type="cofactor">
    <cofactor evidence="1">
        <name>heme</name>
        <dbReference type="ChEBI" id="CHEBI:30413"/>
    </cofactor>
</comment>
<comment type="pathway">
    <text evidence="4">Secondary metabolite biosynthesis; terpenoid biosynthesis.</text>
</comment>
<comment type="subcellular location">
    <subcellularLocation>
        <location evidence="6">Endoplasmic reticulum membrane</location>
        <topology evidence="3">Single-pass membrane protein</topology>
    </subcellularLocation>
</comment>
<comment type="biotechnology">
    <text evidence="5">Ferruginol is a widespread diterpenoid metabolite that serves as a bioactive natural product in its own right, and has been shown to exhibit a range of activities similar to that of the tanshinones such as anti-tumor and antibacterial properties. It therefore contributes to the medicinal effect of Isodon rubescens.</text>
</comment>
<comment type="miscellaneous">
    <text evidence="4">Abietane diterpenoids (e.g. miltiradiene, abietatriene and ferruginol) accumulate specifically in the periderm of roots (PubMed:28381502). The ent-kaurene diterpenoid oridonin, main constituent of Isodon rubescens, accumulates in leaves (PubMed:28381502).</text>
</comment>
<comment type="similarity">
    <text evidence="6">Belongs to the cytochrome P450 family.</text>
</comment>
<keyword id="KW-0256">Endoplasmic reticulum</keyword>
<keyword id="KW-0349">Heme</keyword>
<keyword id="KW-0408">Iron</keyword>
<keyword id="KW-0472">Membrane</keyword>
<keyword id="KW-0479">Metal-binding</keyword>
<keyword id="KW-0503">Monooxygenase</keyword>
<keyword id="KW-0521">NADP</keyword>
<keyword id="KW-0560">Oxidoreductase</keyword>
<keyword id="KW-0812">Transmembrane</keyword>
<keyword id="KW-1133">Transmembrane helix</keyword>
<feature type="chain" id="PRO_5013119921" description="Ferruginol synthase">
    <location>
        <begin position="1"/>
        <end position="492"/>
    </location>
</feature>
<feature type="transmembrane region" description="Helical" evidence="3">
    <location>
        <begin position="1"/>
        <end position="21"/>
    </location>
</feature>
<feature type="topological domain" description="Cytoplasmic" evidence="6">
    <location>
        <begin position="22"/>
        <end position="492"/>
    </location>
</feature>
<feature type="binding site" description="axial binding residue" evidence="2">
    <location>
        <position position="436"/>
    </location>
    <ligand>
        <name>heme</name>
        <dbReference type="ChEBI" id="CHEBI:30413"/>
    </ligand>
    <ligandPart>
        <name>Fe</name>
        <dbReference type="ChEBI" id="CHEBI:18248"/>
    </ligandPart>
</feature>
<gene>
    <name evidence="5" type="primary">CYP76AH30</name>
</gene>
<reference key="1">
    <citation type="journal article" date="2017" name="Plant Physiol.">
        <title>Functional diversification of kaurene synthase-like genes in Isodon rubescens.</title>
        <authorList>
            <person name="Jin B."/>
            <person name="Cui G."/>
            <person name="Guo J."/>
            <person name="Tang J."/>
            <person name="Duan L."/>
            <person name="Lin H."/>
            <person name="Shen Y."/>
            <person name="Chen T."/>
            <person name="Zhang H."/>
            <person name="Huang L."/>
        </authorList>
    </citation>
    <scope>NUCLEOTIDE SEQUENCE [MRNA]</scope>
    <scope>FUNCTION</scope>
    <scope>PATHWAY</scope>
    <scope>CATALYTIC ACTIVITY</scope>
</reference>
<name>CYPH3_ISORU</name>
<protein>
    <recommendedName>
        <fullName evidence="5">Ferruginol synthase</fullName>
        <ecNumber evidence="4">1.14.14.175</ecNumber>
    </recommendedName>
    <alternativeName>
        <fullName evidence="5">Cytochrome P450 76AH30</fullName>
    </alternativeName>
</protein>
<dbReference type="EC" id="1.14.14.175" evidence="4"/>
<dbReference type="EMBL" id="KX580636">
    <property type="protein sequence ID" value="ASC55319.1"/>
    <property type="molecule type" value="mRNA"/>
</dbReference>
<dbReference type="SMR" id="A0A1Z3GBS4"/>
<dbReference type="UniPathway" id="UPA00213"/>
<dbReference type="GO" id="GO:0005789">
    <property type="term" value="C:endoplasmic reticulum membrane"/>
    <property type="evidence" value="ECO:0007669"/>
    <property type="project" value="UniProtKB-SubCell"/>
</dbReference>
<dbReference type="GO" id="GO:0020037">
    <property type="term" value="F:heme binding"/>
    <property type="evidence" value="ECO:0007669"/>
    <property type="project" value="InterPro"/>
</dbReference>
<dbReference type="GO" id="GO:0005506">
    <property type="term" value="F:iron ion binding"/>
    <property type="evidence" value="ECO:0007669"/>
    <property type="project" value="InterPro"/>
</dbReference>
<dbReference type="GO" id="GO:0004497">
    <property type="term" value="F:monooxygenase activity"/>
    <property type="evidence" value="ECO:0007669"/>
    <property type="project" value="UniProtKB-KW"/>
</dbReference>
<dbReference type="GO" id="GO:0016705">
    <property type="term" value="F:oxidoreductase activity, acting on paired donors, with incorporation or reduction of molecular oxygen"/>
    <property type="evidence" value="ECO:0007669"/>
    <property type="project" value="InterPro"/>
</dbReference>
<dbReference type="GO" id="GO:1901946">
    <property type="term" value="P:miltiradiene biosynthetic process"/>
    <property type="evidence" value="ECO:0000314"/>
    <property type="project" value="UniProtKB"/>
</dbReference>
<dbReference type="GO" id="GO:0016114">
    <property type="term" value="P:terpenoid biosynthetic process"/>
    <property type="evidence" value="ECO:0000314"/>
    <property type="project" value="UniProtKB"/>
</dbReference>
<dbReference type="CDD" id="cd11073">
    <property type="entry name" value="CYP76-like"/>
    <property type="match status" value="1"/>
</dbReference>
<dbReference type="FunFam" id="1.10.630.10:FF:000007">
    <property type="entry name" value="Cytochrome P450 76C4"/>
    <property type="match status" value="1"/>
</dbReference>
<dbReference type="Gene3D" id="1.10.630.10">
    <property type="entry name" value="Cytochrome P450"/>
    <property type="match status" value="1"/>
</dbReference>
<dbReference type="InterPro" id="IPR001128">
    <property type="entry name" value="Cyt_P450"/>
</dbReference>
<dbReference type="InterPro" id="IPR017972">
    <property type="entry name" value="Cyt_P450_CS"/>
</dbReference>
<dbReference type="InterPro" id="IPR002401">
    <property type="entry name" value="Cyt_P450_E_grp-I"/>
</dbReference>
<dbReference type="InterPro" id="IPR036396">
    <property type="entry name" value="Cyt_P450_sf"/>
</dbReference>
<dbReference type="PANTHER" id="PTHR47950">
    <property type="entry name" value="CYTOCHROME P450, FAMILY 76, SUBFAMILY C, POLYPEPTIDE 5-RELATED"/>
    <property type="match status" value="1"/>
</dbReference>
<dbReference type="PANTHER" id="PTHR47950:SF4">
    <property type="entry name" value="GERANIOL 8-HYDROXYLASE-LIKE"/>
    <property type="match status" value="1"/>
</dbReference>
<dbReference type="Pfam" id="PF00067">
    <property type="entry name" value="p450"/>
    <property type="match status" value="1"/>
</dbReference>
<dbReference type="PRINTS" id="PR00463">
    <property type="entry name" value="EP450I"/>
</dbReference>
<dbReference type="PRINTS" id="PR00385">
    <property type="entry name" value="P450"/>
</dbReference>
<dbReference type="SUPFAM" id="SSF48264">
    <property type="entry name" value="Cytochrome P450"/>
    <property type="match status" value="1"/>
</dbReference>
<dbReference type="PROSITE" id="PS00086">
    <property type="entry name" value="CYTOCHROME_P450"/>
    <property type="match status" value="1"/>
</dbReference>
<proteinExistence type="evidence at protein level"/>
<evidence type="ECO:0000250" key="1">
    <source>
        <dbReference type="UniProtKB" id="Q00441"/>
    </source>
</evidence>
<evidence type="ECO:0000250" key="2">
    <source>
        <dbReference type="UniProtKB" id="S4UX02"/>
    </source>
</evidence>
<evidence type="ECO:0000255" key="3"/>
<evidence type="ECO:0000269" key="4">
    <source>
    </source>
</evidence>
<evidence type="ECO:0000303" key="5">
    <source>
    </source>
</evidence>
<evidence type="ECO:0000305" key="6"/>
<organism>
    <name type="scientific">Isodon rubescens</name>
    <name type="common">Rabdosia rubescens</name>
    <dbReference type="NCBI Taxonomy" id="587669"/>
    <lineage>
        <taxon>Eukaryota</taxon>
        <taxon>Viridiplantae</taxon>
        <taxon>Streptophyta</taxon>
        <taxon>Embryophyta</taxon>
        <taxon>Tracheophyta</taxon>
        <taxon>Spermatophyta</taxon>
        <taxon>Magnoliopsida</taxon>
        <taxon>eudicotyledons</taxon>
        <taxon>Gunneridae</taxon>
        <taxon>Pentapetalae</taxon>
        <taxon>asterids</taxon>
        <taxon>lamiids</taxon>
        <taxon>Lamiales</taxon>
        <taxon>Lamiaceae</taxon>
        <taxon>Nepetoideae</taxon>
        <taxon>Ocimeae</taxon>
        <taxon>Isodoninae</taxon>
        <taxon>Isodon</taxon>
    </lineage>
</organism>